<organism>
    <name type="scientific">Shigella flexneri</name>
    <dbReference type="NCBI Taxonomy" id="623"/>
    <lineage>
        <taxon>Bacteria</taxon>
        <taxon>Pseudomonadati</taxon>
        <taxon>Pseudomonadota</taxon>
        <taxon>Gammaproteobacteria</taxon>
        <taxon>Enterobacterales</taxon>
        <taxon>Enterobacteriaceae</taxon>
        <taxon>Shigella</taxon>
    </lineage>
</organism>
<evidence type="ECO:0000255" key="1">
    <source>
        <dbReference type="HAMAP-Rule" id="MF_00598"/>
    </source>
</evidence>
<evidence type="ECO:0000305" key="2"/>
<reference key="1">
    <citation type="journal article" date="2002" name="Nucleic Acids Res.">
        <title>Genome sequence of Shigella flexneri 2a: insights into pathogenicity through comparison with genomes of Escherichia coli K12 and O157.</title>
        <authorList>
            <person name="Jin Q."/>
            <person name="Yuan Z."/>
            <person name="Xu J."/>
            <person name="Wang Y."/>
            <person name="Shen Y."/>
            <person name="Lu W."/>
            <person name="Wang J."/>
            <person name="Liu H."/>
            <person name="Yang J."/>
            <person name="Yang F."/>
            <person name="Zhang X."/>
            <person name="Zhang J."/>
            <person name="Yang G."/>
            <person name="Wu H."/>
            <person name="Qu D."/>
            <person name="Dong J."/>
            <person name="Sun L."/>
            <person name="Xue Y."/>
            <person name="Zhao A."/>
            <person name="Gao Y."/>
            <person name="Zhu J."/>
            <person name="Kan B."/>
            <person name="Ding K."/>
            <person name="Chen S."/>
            <person name="Cheng H."/>
            <person name="Yao Z."/>
            <person name="He B."/>
            <person name="Chen R."/>
            <person name="Ma D."/>
            <person name="Qiang B."/>
            <person name="Wen Y."/>
            <person name="Hou Y."/>
            <person name="Yu J."/>
        </authorList>
    </citation>
    <scope>NUCLEOTIDE SEQUENCE [LARGE SCALE GENOMIC DNA]</scope>
    <source>
        <strain>301 / Serotype 2a</strain>
    </source>
</reference>
<reference key="2">
    <citation type="journal article" date="2003" name="Infect. Immun.">
        <title>Complete genome sequence and comparative genomics of Shigella flexneri serotype 2a strain 2457T.</title>
        <authorList>
            <person name="Wei J."/>
            <person name="Goldberg M.B."/>
            <person name="Burland V."/>
            <person name="Venkatesan M.M."/>
            <person name="Deng W."/>
            <person name="Fournier G."/>
            <person name="Mayhew G.F."/>
            <person name="Plunkett G. III"/>
            <person name="Rose D.J."/>
            <person name="Darling A."/>
            <person name="Mau B."/>
            <person name="Perna N.T."/>
            <person name="Payne S.M."/>
            <person name="Runyen-Janecky L.J."/>
            <person name="Zhou S."/>
            <person name="Schwartz D.C."/>
            <person name="Blattner F.R."/>
        </authorList>
    </citation>
    <scope>NUCLEOTIDE SEQUENCE [LARGE SCALE GENOMIC DNA]</scope>
    <source>
        <strain>ATCC 700930 / 2457T / Serotype 2a</strain>
    </source>
</reference>
<dbReference type="EMBL" id="AE005674">
    <property type="protein sequence ID" value="AAN44779.2"/>
    <property type="status" value="ALT_INIT"/>
    <property type="molecule type" value="Genomic_DNA"/>
</dbReference>
<dbReference type="EMBL" id="AE014073">
    <property type="protein sequence ID" value="AAP18588.1"/>
    <property type="status" value="ALT_INIT"/>
    <property type="molecule type" value="Genomic_DNA"/>
</dbReference>
<dbReference type="RefSeq" id="NP_709072.2">
    <property type="nucleotide sequence ID" value="NC_004337.2"/>
</dbReference>
<dbReference type="RefSeq" id="WP_000460680.1">
    <property type="nucleotide sequence ID" value="NZ_WPGW01000137.1"/>
</dbReference>
<dbReference type="SMR" id="P0A829"/>
<dbReference type="STRING" id="198214.SF3316"/>
<dbReference type="PaxDb" id="198214-SF3316"/>
<dbReference type="GeneID" id="1026863"/>
<dbReference type="GeneID" id="93778703"/>
<dbReference type="KEGG" id="sfl:SF3316"/>
<dbReference type="KEGG" id="sfx:S3540"/>
<dbReference type="PATRIC" id="fig|198214.7.peg.3925"/>
<dbReference type="HOGENOM" id="CLU_133242_0_0_6"/>
<dbReference type="Proteomes" id="UP000001006">
    <property type="component" value="Chromosome"/>
</dbReference>
<dbReference type="Proteomes" id="UP000002673">
    <property type="component" value="Chromosome"/>
</dbReference>
<dbReference type="HAMAP" id="MF_00598">
    <property type="entry name" value="Smg"/>
    <property type="match status" value="1"/>
</dbReference>
<dbReference type="InterPro" id="IPR007456">
    <property type="entry name" value="Smg"/>
</dbReference>
<dbReference type="NCBIfam" id="NF002897">
    <property type="entry name" value="PRK03430.1"/>
    <property type="match status" value="1"/>
</dbReference>
<dbReference type="PANTHER" id="PTHR38692">
    <property type="entry name" value="PROTEIN SMG"/>
    <property type="match status" value="1"/>
</dbReference>
<dbReference type="PANTHER" id="PTHR38692:SF1">
    <property type="entry name" value="PROTEIN SMG"/>
    <property type="match status" value="1"/>
</dbReference>
<dbReference type="Pfam" id="PF04361">
    <property type="entry name" value="DUF494"/>
    <property type="match status" value="1"/>
</dbReference>
<feature type="chain" id="PRO_0000209182" description="Protein Smg">
    <location>
        <begin position="1"/>
        <end position="157"/>
    </location>
</feature>
<proteinExistence type="inferred from homology"/>
<sequence>MFDVLMYLFETYIHTEAELRVDQDKLEQDLTDAGFEREDIYNALLWLEKLADYQEGLAEPMQLASDPLSMRIYTPEECERLDASCRGFLLFLEQIQVLNLETREMVIERVLALDNAEFELDDLKWVILMVLFNIPGCENAYQQMEELLFEVNEGMLH</sequence>
<keyword id="KW-1185">Reference proteome</keyword>
<gene>
    <name evidence="1" type="primary">smg</name>
    <name type="ordered locus">SF3316</name>
    <name type="ordered locus">S3540</name>
</gene>
<name>SMG_SHIFL</name>
<comment type="similarity">
    <text evidence="1">Belongs to the Smg family.</text>
</comment>
<comment type="sequence caution" evidence="2">
    <conflict type="erroneous initiation">
        <sequence resource="EMBL-CDS" id="AAN44779"/>
    </conflict>
    <text>Truncated N-terminus.</text>
</comment>
<comment type="sequence caution" evidence="2">
    <conflict type="erroneous initiation">
        <sequence resource="EMBL-CDS" id="AAP18588"/>
    </conflict>
    <text>Truncated N-terminus.</text>
</comment>
<protein>
    <recommendedName>
        <fullName evidence="1">Protein Smg</fullName>
    </recommendedName>
</protein>
<accession>P0A829</accession>
<accession>P30853</accession>